<feature type="chain" id="PRO_0000437238" description="Fructose-bisphosphate aldolase 4, cytosolic">
    <location>
        <begin position="1"/>
        <end position="393"/>
    </location>
</feature>
<feature type="active site" description="Proton acceptor" evidence="1">
    <location>
        <position position="217"/>
    </location>
</feature>
<feature type="active site" description="Schiff-base intermediate with dihydroxyacetone-P" evidence="1">
    <location>
        <position position="259"/>
    </location>
</feature>
<feature type="binding site" evidence="1">
    <location>
        <position position="73"/>
    </location>
    <ligand>
        <name>substrate</name>
    </ligand>
</feature>
<feature type="binding site" evidence="1">
    <location>
        <begin position="301"/>
        <end position="303"/>
    </location>
    <ligand>
        <name>substrate</name>
    </ligand>
</feature>
<feature type="binding site" evidence="1">
    <location>
        <position position="333"/>
    </location>
    <ligand>
        <name>substrate</name>
    </ligand>
</feature>
<feature type="site" description="Necessary for preference for fructose 1,6-bisphosphate over fructose 1-phosphate" evidence="1">
    <location>
        <position position="393"/>
    </location>
</feature>
<feature type="modified residue" description="S-glutathionyl cysteine; transient; alternate" evidence="3">
    <location>
        <position position="207"/>
    </location>
</feature>
<feature type="modified residue" description="S-nitrosocysteine; transient; alternate" evidence="3">
    <location>
        <position position="207"/>
    </location>
</feature>
<feature type="splice variant" id="VSP_058503" description="In isoform 2.">
    <original>GKSYFRRTFHSSIIQFHPQLSILIWHRRYSIIRTY</original>
    <variation>D</variation>
    <location>
        <begin position="10"/>
        <end position="44"/>
    </location>
</feature>
<feature type="sequence conflict" description="In Ref. 4; AAM62481." evidence="6" ref="4">
    <original>I</original>
    <variation>V</variation>
    <location>
        <position position="23"/>
    </location>
</feature>
<feature type="sequence conflict" description="In Ref. 4; AAM62481." evidence="6" ref="4">
    <original>T</original>
    <variation>I</variation>
    <location>
        <position position="155"/>
    </location>
</feature>
<feature type="sequence conflict" description="In Ref. 4; AAM62481." evidence="6" ref="4">
    <original>G</original>
    <variation>R</variation>
    <location>
        <position position="211"/>
    </location>
</feature>
<feature type="sequence conflict" description="In Ref. 3; AAL32644/AAM13358." evidence="6" ref="3">
    <original>Q</original>
    <variation>R</variation>
    <location>
        <position position="287"/>
    </location>
</feature>
<name>ALFC4_ARATH</name>
<comment type="function">
    <text evidence="3">Fructose-bisphosphate aldolase that plays a key role in glycolysis and gluconeogenesis.</text>
</comment>
<comment type="catalytic activity">
    <reaction evidence="3">
        <text>beta-D-fructose 1,6-bisphosphate = D-glyceraldehyde 3-phosphate + dihydroxyacetone phosphate</text>
        <dbReference type="Rhea" id="RHEA:14729"/>
        <dbReference type="ChEBI" id="CHEBI:32966"/>
        <dbReference type="ChEBI" id="CHEBI:57642"/>
        <dbReference type="ChEBI" id="CHEBI:59776"/>
        <dbReference type="EC" id="4.1.2.13"/>
    </reaction>
</comment>
<comment type="pathway">
    <text evidence="6">Carbohydrate degradation; glycolysis; D-glyceraldehyde 3-phosphate and glycerone phosphate from D-glucose: step 4/4.</text>
</comment>
<comment type="subunit">
    <text evidence="2">Homotetramer.</text>
</comment>
<comment type="interaction">
    <interactant intactId="EBI-4442745">
        <id>F4KGQ0</id>
    </interactant>
    <interactant intactId="EBI-449265">
        <id>Q9LF98</id>
        <label>FBA8</label>
    </interactant>
    <organismsDiffer>false</organismsDiffer>
    <experiments>8</experiments>
</comment>
<comment type="subcellular location">
    <subcellularLocation>
        <location evidence="4">Cytoplasm</location>
        <location evidence="4">Cytosol</location>
    </subcellularLocation>
</comment>
<comment type="alternative products">
    <event type="alternative splicing"/>
    <isoform>
        <id>F4KGQ0-1</id>
        <name>1</name>
        <sequence type="displayed"/>
    </isoform>
    <isoform>
        <id>F4KGQ0-2</id>
        <name>2</name>
        <sequence type="described" ref="VSP_058503"/>
    </isoform>
</comment>
<comment type="tissue specificity">
    <text evidence="4">Highly expressed in flowers.</text>
</comment>
<comment type="induction">
    <text evidence="4">By glucose and fructose (PubMed:22561114). Induced by abiotic stresses (PubMed:22561114).</text>
</comment>
<comment type="PTM">
    <text evidence="3">S-glutathionylated at Cys-207.</text>
</comment>
<comment type="PTM">
    <text evidence="3">S-nitrosylated at Cys-207.</text>
</comment>
<comment type="similarity">
    <text evidence="6">Belongs to the class I fructose-bisphosphate aldolase family.</text>
</comment>
<keyword id="KW-0025">Alternative splicing</keyword>
<keyword id="KW-0963">Cytoplasm</keyword>
<keyword id="KW-0318">Glutathionylation</keyword>
<keyword id="KW-0324">Glycolysis</keyword>
<keyword id="KW-0456">Lyase</keyword>
<keyword id="KW-1185">Reference proteome</keyword>
<keyword id="KW-0702">S-nitrosylation</keyword>
<keyword id="KW-0704">Schiff base</keyword>
<sequence length="393" mass="42906">MSCFKSKFAGKSYFRRTFHSSIIQFHPQLSILIWHRRYSIIRTYELIANAAYIGTPGKGILAADESTGTIGKRFVSINVENVESNRRALRELLFTTPGALQYISGIILFEETLYQKTASGKLFVDVMKEAGVLPGIKVDKGTVELAGTNGETTTTGLDGLGDRCKKYYEAGARFAKWRAVLKIGNNEPSELAIHENAYGLARYAVICQENGLVPIVEPEILVDGSHDIEKCAYVTERVLAACYKALSDHHVILEGTLLKPNMVTPGSDSGSKVKPEVIAKHTVRALQRTVPAAVPAVVFLSGGQSEEEATVNLNAINQLKGKKPWSLTFSYGRALQQSTLKAWGGKEENVDKAQKAFLARAKANSEATLGGYKGDAQLGEGASESLHVKDYKY</sequence>
<proteinExistence type="evidence at protein level"/>
<gene>
    <name evidence="5" type="primary">FBA4</name>
    <name evidence="7" type="ordered locus">At5g03690</name>
    <name evidence="8" type="ORF">F17C15_110</name>
</gene>
<dbReference type="EC" id="4.1.2.13" evidence="3"/>
<dbReference type="EMBL" id="AL162506">
    <property type="protein sequence ID" value="CAB82934.1"/>
    <property type="molecule type" value="Genomic_DNA"/>
</dbReference>
<dbReference type="EMBL" id="CP002688">
    <property type="protein sequence ID" value="AED90642.1"/>
    <property type="molecule type" value="Genomic_DNA"/>
</dbReference>
<dbReference type="EMBL" id="CP002688">
    <property type="protein sequence ID" value="AED90643.1"/>
    <property type="molecule type" value="Genomic_DNA"/>
</dbReference>
<dbReference type="EMBL" id="AY062566">
    <property type="protein sequence ID" value="AAL32644.1"/>
    <property type="molecule type" value="mRNA"/>
</dbReference>
<dbReference type="EMBL" id="AY093359">
    <property type="protein sequence ID" value="AAM13358.1"/>
    <property type="molecule type" value="mRNA"/>
</dbReference>
<dbReference type="EMBL" id="AY085249">
    <property type="protein sequence ID" value="AAM62481.1"/>
    <property type="molecule type" value="mRNA"/>
</dbReference>
<dbReference type="PIR" id="T48396">
    <property type="entry name" value="T48396"/>
</dbReference>
<dbReference type="RefSeq" id="NP_568127.1">
    <molecule id="F4KGQ0-1"/>
    <property type="nucleotide sequence ID" value="NM_120450.3"/>
</dbReference>
<dbReference type="RefSeq" id="NP_850759.1">
    <molecule id="F4KGQ0-2"/>
    <property type="nucleotide sequence ID" value="NM_180428.2"/>
</dbReference>
<dbReference type="SMR" id="F4KGQ0"/>
<dbReference type="FunCoup" id="F4KGQ0">
    <property type="interactions" value="1839"/>
</dbReference>
<dbReference type="IntAct" id="F4KGQ0">
    <property type="interactions" value="1"/>
</dbReference>
<dbReference type="STRING" id="3702.F4KGQ0"/>
<dbReference type="GlyGen" id="F4KGQ0">
    <property type="glycosylation" value="1 site"/>
</dbReference>
<dbReference type="iPTMnet" id="F4KGQ0"/>
<dbReference type="PaxDb" id="3702-AT5G03690.1"/>
<dbReference type="ProteomicsDB" id="245027">
    <molecule id="F4KGQ0-1"/>
</dbReference>
<dbReference type="EnsemblPlants" id="AT5G03690.1">
    <molecule id="F4KGQ0-1"/>
    <property type="protein sequence ID" value="AT5G03690.1"/>
    <property type="gene ID" value="AT5G03690"/>
</dbReference>
<dbReference type="EnsemblPlants" id="AT5G03690.2">
    <molecule id="F4KGQ0-2"/>
    <property type="protein sequence ID" value="AT5G03690.2"/>
    <property type="gene ID" value="AT5G03690"/>
</dbReference>
<dbReference type="GeneID" id="831759"/>
<dbReference type="Gramene" id="AT5G03690.1">
    <molecule id="F4KGQ0-1"/>
    <property type="protein sequence ID" value="AT5G03690.1"/>
    <property type="gene ID" value="AT5G03690"/>
</dbReference>
<dbReference type="Gramene" id="AT5G03690.2">
    <molecule id="F4KGQ0-2"/>
    <property type="protein sequence ID" value="AT5G03690.2"/>
    <property type="gene ID" value="AT5G03690"/>
</dbReference>
<dbReference type="KEGG" id="ath:AT5G03690"/>
<dbReference type="Araport" id="AT5G03690"/>
<dbReference type="TAIR" id="AT5G03690">
    <property type="gene designation" value="FBA4"/>
</dbReference>
<dbReference type="eggNOG" id="KOG1557">
    <property type="taxonomic scope" value="Eukaryota"/>
</dbReference>
<dbReference type="HOGENOM" id="CLU_031243_0_0_1"/>
<dbReference type="InParanoid" id="F4KGQ0"/>
<dbReference type="OMA" id="DITHRIM"/>
<dbReference type="OrthoDB" id="36455at2759"/>
<dbReference type="UniPathway" id="UPA00109">
    <property type="reaction ID" value="UER00183"/>
</dbReference>
<dbReference type="PRO" id="PR:F4KGQ0"/>
<dbReference type="Proteomes" id="UP000006548">
    <property type="component" value="Chromosome 5"/>
</dbReference>
<dbReference type="ExpressionAtlas" id="F4KGQ0">
    <property type="expression patterns" value="baseline and differential"/>
</dbReference>
<dbReference type="GO" id="GO:0005829">
    <property type="term" value="C:cytosol"/>
    <property type="evidence" value="ECO:0007005"/>
    <property type="project" value="TAIR"/>
</dbReference>
<dbReference type="GO" id="GO:0004332">
    <property type="term" value="F:fructose-bisphosphate aldolase activity"/>
    <property type="evidence" value="ECO:0000250"/>
    <property type="project" value="UniProtKB"/>
</dbReference>
<dbReference type="GO" id="GO:0003729">
    <property type="term" value="F:mRNA binding"/>
    <property type="evidence" value="ECO:0000314"/>
    <property type="project" value="TAIR"/>
</dbReference>
<dbReference type="GO" id="GO:0006094">
    <property type="term" value="P:gluconeogenesis"/>
    <property type="evidence" value="ECO:0000250"/>
    <property type="project" value="UniProtKB"/>
</dbReference>
<dbReference type="GO" id="GO:0006096">
    <property type="term" value="P:glycolytic process"/>
    <property type="evidence" value="ECO:0000250"/>
    <property type="project" value="UniProtKB"/>
</dbReference>
<dbReference type="CDD" id="cd00948">
    <property type="entry name" value="FBP_aldolase_I_a"/>
    <property type="match status" value="1"/>
</dbReference>
<dbReference type="FunFam" id="3.20.20.70:FF:000068">
    <property type="entry name" value="Fructose-bisphosphate aldolase"/>
    <property type="match status" value="1"/>
</dbReference>
<dbReference type="Gene3D" id="3.20.20.70">
    <property type="entry name" value="Aldolase class I"/>
    <property type="match status" value="1"/>
</dbReference>
<dbReference type="InterPro" id="IPR029768">
    <property type="entry name" value="Aldolase_I_AS"/>
</dbReference>
<dbReference type="InterPro" id="IPR013785">
    <property type="entry name" value="Aldolase_TIM"/>
</dbReference>
<dbReference type="InterPro" id="IPR000741">
    <property type="entry name" value="FBA_I"/>
</dbReference>
<dbReference type="NCBIfam" id="NF033379">
    <property type="entry name" value="FrucBisAld_I"/>
    <property type="match status" value="1"/>
</dbReference>
<dbReference type="PANTHER" id="PTHR11627">
    <property type="entry name" value="FRUCTOSE-BISPHOSPHATE ALDOLASE"/>
    <property type="match status" value="1"/>
</dbReference>
<dbReference type="Pfam" id="PF00274">
    <property type="entry name" value="Glycolytic"/>
    <property type="match status" value="1"/>
</dbReference>
<dbReference type="SUPFAM" id="SSF51569">
    <property type="entry name" value="Aldolase"/>
    <property type="match status" value="1"/>
</dbReference>
<dbReference type="PROSITE" id="PS00158">
    <property type="entry name" value="ALDOLASE_CLASS_I"/>
    <property type="match status" value="1"/>
</dbReference>
<protein>
    <recommendedName>
        <fullName evidence="6">Fructose-bisphosphate aldolase 4, cytosolic</fullName>
        <shortName evidence="5">AtFBA4</shortName>
        <ecNumber evidence="3">4.1.2.13</ecNumber>
    </recommendedName>
    <alternativeName>
        <fullName evidence="6">Cytosolic aldolase 3</fullName>
        <shortName evidence="6">cAld3</shortName>
    </alternativeName>
</protein>
<reference key="1">
    <citation type="journal article" date="2000" name="Nature">
        <title>Sequence and analysis of chromosome 5 of the plant Arabidopsis thaliana.</title>
        <authorList>
            <person name="Tabata S."/>
            <person name="Kaneko T."/>
            <person name="Nakamura Y."/>
            <person name="Kotani H."/>
            <person name="Kato T."/>
            <person name="Asamizu E."/>
            <person name="Miyajima N."/>
            <person name="Sasamoto S."/>
            <person name="Kimura T."/>
            <person name="Hosouchi T."/>
            <person name="Kawashima K."/>
            <person name="Kohara M."/>
            <person name="Matsumoto M."/>
            <person name="Matsuno A."/>
            <person name="Muraki A."/>
            <person name="Nakayama S."/>
            <person name="Nakazaki N."/>
            <person name="Naruo K."/>
            <person name="Okumura S."/>
            <person name="Shinpo S."/>
            <person name="Takeuchi C."/>
            <person name="Wada T."/>
            <person name="Watanabe A."/>
            <person name="Yamada M."/>
            <person name="Yasuda M."/>
            <person name="Sato S."/>
            <person name="de la Bastide M."/>
            <person name="Huang E."/>
            <person name="Spiegel L."/>
            <person name="Gnoj L."/>
            <person name="O'Shaughnessy A."/>
            <person name="Preston R."/>
            <person name="Habermann K."/>
            <person name="Murray J."/>
            <person name="Johnson D."/>
            <person name="Rohlfing T."/>
            <person name="Nelson J."/>
            <person name="Stoneking T."/>
            <person name="Pepin K."/>
            <person name="Spieth J."/>
            <person name="Sekhon M."/>
            <person name="Armstrong J."/>
            <person name="Becker M."/>
            <person name="Belter E."/>
            <person name="Cordum H."/>
            <person name="Cordes M."/>
            <person name="Courtney L."/>
            <person name="Courtney W."/>
            <person name="Dante M."/>
            <person name="Du H."/>
            <person name="Edwards J."/>
            <person name="Fryman J."/>
            <person name="Haakensen B."/>
            <person name="Lamar E."/>
            <person name="Latreille P."/>
            <person name="Leonard S."/>
            <person name="Meyer R."/>
            <person name="Mulvaney E."/>
            <person name="Ozersky P."/>
            <person name="Riley A."/>
            <person name="Strowmatt C."/>
            <person name="Wagner-McPherson C."/>
            <person name="Wollam A."/>
            <person name="Yoakum M."/>
            <person name="Bell M."/>
            <person name="Dedhia N."/>
            <person name="Parnell L."/>
            <person name="Shah R."/>
            <person name="Rodriguez M."/>
            <person name="Hoon See L."/>
            <person name="Vil D."/>
            <person name="Baker J."/>
            <person name="Kirchoff K."/>
            <person name="Toth K."/>
            <person name="King L."/>
            <person name="Bahret A."/>
            <person name="Miller B."/>
            <person name="Marra M.A."/>
            <person name="Martienssen R."/>
            <person name="McCombie W.R."/>
            <person name="Wilson R.K."/>
            <person name="Murphy G."/>
            <person name="Bancroft I."/>
            <person name="Volckaert G."/>
            <person name="Wambutt R."/>
            <person name="Duesterhoeft A."/>
            <person name="Stiekema W."/>
            <person name="Pohl T."/>
            <person name="Entian K.-D."/>
            <person name="Terryn N."/>
            <person name="Hartley N."/>
            <person name="Bent E."/>
            <person name="Johnson S."/>
            <person name="Langham S.-A."/>
            <person name="McCullagh B."/>
            <person name="Robben J."/>
            <person name="Grymonprez B."/>
            <person name="Zimmermann W."/>
            <person name="Ramsperger U."/>
            <person name="Wedler H."/>
            <person name="Balke K."/>
            <person name="Wedler E."/>
            <person name="Peters S."/>
            <person name="van Staveren M."/>
            <person name="Dirkse W."/>
            <person name="Mooijman P."/>
            <person name="Klein Lankhorst R."/>
            <person name="Weitzenegger T."/>
            <person name="Bothe G."/>
            <person name="Rose M."/>
            <person name="Hauf J."/>
            <person name="Berneiser S."/>
            <person name="Hempel S."/>
            <person name="Feldpausch M."/>
            <person name="Lamberth S."/>
            <person name="Villarroel R."/>
            <person name="Gielen J."/>
            <person name="Ardiles W."/>
            <person name="Bents O."/>
            <person name="Lemcke K."/>
            <person name="Kolesov G."/>
            <person name="Mayer K.F.X."/>
            <person name="Rudd S."/>
            <person name="Schoof H."/>
            <person name="Schueller C."/>
            <person name="Zaccaria P."/>
            <person name="Mewes H.-W."/>
            <person name="Bevan M."/>
            <person name="Fransz P.F."/>
        </authorList>
    </citation>
    <scope>NUCLEOTIDE SEQUENCE [LARGE SCALE GENOMIC DNA]</scope>
    <source>
        <strain>cv. Columbia</strain>
    </source>
</reference>
<reference key="2">
    <citation type="journal article" date="2017" name="Plant J.">
        <title>Araport11: a complete reannotation of the Arabidopsis thaliana reference genome.</title>
        <authorList>
            <person name="Cheng C.Y."/>
            <person name="Krishnakumar V."/>
            <person name="Chan A.P."/>
            <person name="Thibaud-Nissen F."/>
            <person name="Schobel S."/>
            <person name="Town C.D."/>
        </authorList>
    </citation>
    <scope>GENOME REANNOTATION</scope>
    <source>
        <strain>cv. Columbia</strain>
    </source>
</reference>
<reference key="3">
    <citation type="journal article" date="2003" name="Science">
        <title>Empirical analysis of transcriptional activity in the Arabidopsis genome.</title>
        <authorList>
            <person name="Yamada K."/>
            <person name="Lim J."/>
            <person name="Dale J.M."/>
            <person name="Chen H."/>
            <person name="Shinn P."/>
            <person name="Palm C.J."/>
            <person name="Southwick A.M."/>
            <person name="Wu H.C."/>
            <person name="Kim C.J."/>
            <person name="Nguyen M."/>
            <person name="Pham P.K."/>
            <person name="Cheuk R.F."/>
            <person name="Karlin-Newmann G."/>
            <person name="Liu S.X."/>
            <person name="Lam B."/>
            <person name="Sakano H."/>
            <person name="Wu T."/>
            <person name="Yu G."/>
            <person name="Miranda M."/>
            <person name="Quach H.L."/>
            <person name="Tripp M."/>
            <person name="Chang C.H."/>
            <person name="Lee J.M."/>
            <person name="Toriumi M.J."/>
            <person name="Chan M.M."/>
            <person name="Tang C.C."/>
            <person name="Onodera C.S."/>
            <person name="Deng J.M."/>
            <person name="Akiyama K."/>
            <person name="Ansari Y."/>
            <person name="Arakawa T."/>
            <person name="Banh J."/>
            <person name="Banno F."/>
            <person name="Bowser L."/>
            <person name="Brooks S.Y."/>
            <person name="Carninci P."/>
            <person name="Chao Q."/>
            <person name="Choy N."/>
            <person name="Enju A."/>
            <person name="Goldsmith A.D."/>
            <person name="Gurjal M."/>
            <person name="Hansen N.F."/>
            <person name="Hayashizaki Y."/>
            <person name="Johnson-Hopson C."/>
            <person name="Hsuan V.W."/>
            <person name="Iida K."/>
            <person name="Karnes M."/>
            <person name="Khan S."/>
            <person name="Koesema E."/>
            <person name="Ishida J."/>
            <person name="Jiang P.X."/>
            <person name="Jones T."/>
            <person name="Kawai J."/>
            <person name="Kamiya A."/>
            <person name="Meyers C."/>
            <person name="Nakajima M."/>
            <person name="Narusaka M."/>
            <person name="Seki M."/>
            <person name="Sakurai T."/>
            <person name="Satou M."/>
            <person name="Tamse R."/>
            <person name="Vaysberg M."/>
            <person name="Wallender E.K."/>
            <person name="Wong C."/>
            <person name="Yamamura Y."/>
            <person name="Yuan S."/>
            <person name="Shinozaki K."/>
            <person name="Davis R.W."/>
            <person name="Theologis A."/>
            <person name="Ecker J.R."/>
        </authorList>
    </citation>
    <scope>NUCLEOTIDE SEQUENCE [LARGE SCALE MRNA] (ISOFORM 2)</scope>
    <source>
        <strain>cv. Columbia</strain>
    </source>
</reference>
<reference key="4">
    <citation type="submission" date="2002-03" db="EMBL/GenBank/DDBJ databases">
        <title>Full-length cDNA from Arabidopsis thaliana.</title>
        <authorList>
            <person name="Brover V.V."/>
            <person name="Troukhan M.E."/>
            <person name="Alexandrov N.A."/>
            <person name="Lu Y.-P."/>
            <person name="Flavell R.B."/>
            <person name="Feldmann K.A."/>
        </authorList>
    </citation>
    <scope>NUCLEOTIDE SEQUENCE [LARGE SCALE MRNA] (ISOFORM 1)</scope>
</reference>
<reference key="5">
    <citation type="journal article" date="2012" name="Gene">
        <title>Identification and characterization of fructose 1,6-bisphosphate aldolase genes in Arabidopsis reveal a gene family with diverse responses to abiotic stresses.</title>
        <authorList>
            <person name="Lu W."/>
            <person name="Tang X."/>
            <person name="Huo Y."/>
            <person name="Xu R."/>
            <person name="Qi S."/>
            <person name="Huang J."/>
            <person name="Zheng C."/>
            <person name="Wu C.A."/>
        </authorList>
    </citation>
    <scope>SUBCELLULAR LOCATION</scope>
    <scope>TISSUE SPECIFICITY</scope>
    <scope>INDUCTION</scope>
    <scope>GENE FAMILY</scope>
    <scope>NOMENCLATURE</scope>
</reference>
<evidence type="ECO:0000250" key="1">
    <source>
        <dbReference type="UniProtKB" id="P00883"/>
    </source>
</evidence>
<evidence type="ECO:0000250" key="2">
    <source>
        <dbReference type="UniProtKB" id="Q944G9"/>
    </source>
</evidence>
<evidence type="ECO:0000250" key="3">
    <source>
        <dbReference type="UniProtKB" id="Q9SJQ9"/>
    </source>
</evidence>
<evidence type="ECO:0000269" key="4">
    <source>
    </source>
</evidence>
<evidence type="ECO:0000303" key="5">
    <source>
    </source>
</evidence>
<evidence type="ECO:0000305" key="6"/>
<evidence type="ECO:0000312" key="7">
    <source>
        <dbReference type="Araport" id="AT5G03690"/>
    </source>
</evidence>
<evidence type="ECO:0000312" key="8">
    <source>
        <dbReference type="EMBL" id="CAB82934.1"/>
    </source>
</evidence>
<organism>
    <name type="scientific">Arabidopsis thaliana</name>
    <name type="common">Mouse-ear cress</name>
    <dbReference type="NCBI Taxonomy" id="3702"/>
    <lineage>
        <taxon>Eukaryota</taxon>
        <taxon>Viridiplantae</taxon>
        <taxon>Streptophyta</taxon>
        <taxon>Embryophyta</taxon>
        <taxon>Tracheophyta</taxon>
        <taxon>Spermatophyta</taxon>
        <taxon>Magnoliopsida</taxon>
        <taxon>eudicotyledons</taxon>
        <taxon>Gunneridae</taxon>
        <taxon>Pentapetalae</taxon>
        <taxon>rosids</taxon>
        <taxon>malvids</taxon>
        <taxon>Brassicales</taxon>
        <taxon>Brassicaceae</taxon>
        <taxon>Camelineae</taxon>
        <taxon>Arabidopsis</taxon>
    </lineage>
</organism>
<accession>F4KGQ0</accession>
<accession>Q8LET3</accession>
<accession>Q8W4G8</accession>
<accession>Q9LZR9</accession>